<keyword id="KW-0150">Chloroplast</keyword>
<keyword id="KW-0934">Plastid</keyword>
<keyword id="KW-0687">Ribonucleoprotein</keyword>
<keyword id="KW-0689">Ribosomal protein</keyword>
<feature type="chain" id="PRO_0000163580" description="Large ribosomal subunit protein bL19c">
    <location>
        <begin position="1"/>
        <end position="130"/>
    </location>
</feature>
<accession>P56356</accession>
<comment type="subcellular location">
    <subcellularLocation>
        <location>Plastid</location>
        <location>Chloroplast</location>
    </subcellularLocation>
</comment>
<comment type="similarity">
    <text evidence="1">Belongs to the bacterial ribosomal protein bL19 family.</text>
</comment>
<gene>
    <name type="primary">rpl19</name>
</gene>
<reference key="1">
    <citation type="journal article" date="1997" name="Proc. Natl. Acad. Sci. U.S.A.">
        <title>Complete nucleotide sequence of the chloroplast genome from the green alga Chlorella vulgaris: the existence of genes possibly involved in chloroplast division.</title>
        <authorList>
            <person name="Wakasugi T."/>
            <person name="Nagai T."/>
            <person name="Kapoor M."/>
            <person name="Sugita M."/>
            <person name="Ito M."/>
            <person name="Ito S."/>
            <person name="Tsudzuki J."/>
            <person name="Nakashima K."/>
            <person name="Tsudzuki T."/>
            <person name="Suzuki Y."/>
            <person name="Hamada A."/>
            <person name="Ohta T."/>
            <person name="Inamura A."/>
            <person name="Yoshinaga K."/>
            <person name="Sugiura M."/>
        </authorList>
    </citation>
    <scope>NUCLEOTIDE SEQUENCE [LARGE SCALE GENOMIC DNA]</scope>
    <source>
        <strain>IAM C-27 / Tamiya</strain>
    </source>
</reference>
<organism>
    <name type="scientific">Chlorella vulgaris</name>
    <name type="common">Green alga</name>
    <dbReference type="NCBI Taxonomy" id="3077"/>
    <lineage>
        <taxon>Eukaryota</taxon>
        <taxon>Viridiplantae</taxon>
        <taxon>Chlorophyta</taxon>
        <taxon>core chlorophytes</taxon>
        <taxon>Trebouxiophyceae</taxon>
        <taxon>Chlorellales</taxon>
        <taxon>Chlorellaceae</taxon>
        <taxon>Chlorella clade</taxon>
        <taxon>Chlorella</taxon>
    </lineage>
</organism>
<sequence>MAKLQQLVQAIQSGTIKTELPDVRVGDLVRIGVSIQEGNKQRIQPFEGTVISKHQAGANSTVTVRKSLQGIGVERVFPLYAPCVANLQVLRRAQVSRAKLYYLRSRTGKATRLKEKFETLPQIWMNQNQH</sequence>
<dbReference type="EMBL" id="AB001684">
    <property type="protein sequence ID" value="BAA57887.1"/>
    <property type="molecule type" value="Genomic_DNA"/>
</dbReference>
<dbReference type="PIR" id="T07240">
    <property type="entry name" value="T07240"/>
</dbReference>
<dbReference type="RefSeq" id="NP_045812.1">
    <property type="nucleotide sequence ID" value="NC_001865.1"/>
</dbReference>
<dbReference type="SMR" id="P56356"/>
<dbReference type="GeneID" id="809145"/>
<dbReference type="GO" id="GO:0009507">
    <property type="term" value="C:chloroplast"/>
    <property type="evidence" value="ECO:0007669"/>
    <property type="project" value="UniProtKB-SubCell"/>
</dbReference>
<dbReference type="GO" id="GO:1990904">
    <property type="term" value="C:ribonucleoprotein complex"/>
    <property type="evidence" value="ECO:0007669"/>
    <property type="project" value="UniProtKB-KW"/>
</dbReference>
<dbReference type="GO" id="GO:0005840">
    <property type="term" value="C:ribosome"/>
    <property type="evidence" value="ECO:0007669"/>
    <property type="project" value="UniProtKB-KW"/>
</dbReference>
<dbReference type="GO" id="GO:0003735">
    <property type="term" value="F:structural constituent of ribosome"/>
    <property type="evidence" value="ECO:0007669"/>
    <property type="project" value="InterPro"/>
</dbReference>
<dbReference type="GO" id="GO:0006412">
    <property type="term" value="P:translation"/>
    <property type="evidence" value="ECO:0007669"/>
    <property type="project" value="UniProtKB-UniRule"/>
</dbReference>
<dbReference type="Gene3D" id="2.30.30.790">
    <property type="match status" value="1"/>
</dbReference>
<dbReference type="HAMAP" id="MF_00402">
    <property type="entry name" value="Ribosomal_bL19"/>
    <property type="match status" value="1"/>
</dbReference>
<dbReference type="InterPro" id="IPR001857">
    <property type="entry name" value="Ribosomal_bL19"/>
</dbReference>
<dbReference type="InterPro" id="IPR018257">
    <property type="entry name" value="Ribosomal_bL19_CS"/>
</dbReference>
<dbReference type="InterPro" id="IPR038657">
    <property type="entry name" value="Ribosomal_bL19_sf"/>
</dbReference>
<dbReference type="InterPro" id="IPR008991">
    <property type="entry name" value="Translation_prot_SH3-like_sf"/>
</dbReference>
<dbReference type="NCBIfam" id="TIGR01024">
    <property type="entry name" value="rplS_bact"/>
    <property type="match status" value="1"/>
</dbReference>
<dbReference type="PANTHER" id="PTHR15680:SF9">
    <property type="entry name" value="LARGE RIBOSOMAL SUBUNIT PROTEIN BL19M"/>
    <property type="match status" value="1"/>
</dbReference>
<dbReference type="PANTHER" id="PTHR15680">
    <property type="entry name" value="RIBOSOMAL PROTEIN L19"/>
    <property type="match status" value="1"/>
</dbReference>
<dbReference type="Pfam" id="PF01245">
    <property type="entry name" value="Ribosomal_L19"/>
    <property type="match status" value="1"/>
</dbReference>
<dbReference type="PIRSF" id="PIRSF002191">
    <property type="entry name" value="Ribosomal_L19"/>
    <property type="match status" value="1"/>
</dbReference>
<dbReference type="PRINTS" id="PR00061">
    <property type="entry name" value="RIBOSOMALL19"/>
</dbReference>
<dbReference type="SUPFAM" id="SSF50104">
    <property type="entry name" value="Translation proteins SH3-like domain"/>
    <property type="match status" value="1"/>
</dbReference>
<dbReference type="PROSITE" id="PS01015">
    <property type="entry name" value="RIBOSOMAL_L19"/>
    <property type="match status" value="1"/>
</dbReference>
<proteinExistence type="inferred from homology"/>
<name>RK19_CHLVU</name>
<protein>
    <recommendedName>
        <fullName evidence="1">Large ribosomal subunit protein bL19c</fullName>
    </recommendedName>
    <alternativeName>
        <fullName>50S ribosomal protein L19, chloroplastic</fullName>
    </alternativeName>
</protein>
<geneLocation type="chloroplast"/>
<evidence type="ECO:0000305" key="1"/>